<evidence type="ECO:0000250" key="1">
    <source>
        <dbReference type="UniProtKB" id="P04308"/>
    </source>
</evidence>
<evidence type="ECO:0000255" key="2">
    <source>
        <dbReference type="PROSITE-ProRule" id="PRU00541"/>
    </source>
</evidence>
<evidence type="ECO:0000255" key="3">
    <source>
        <dbReference type="PROSITE-ProRule" id="PRU00542"/>
    </source>
</evidence>
<evidence type="ECO:0000305" key="4"/>
<gene>
    <name type="primary">OPG118</name>
    <name type="synonym">VETFS</name>
    <name type="ORF">D6R</name>
</gene>
<protein>
    <recommendedName>
        <fullName>Early transcription factor 70 kDa subunit</fullName>
        <ecNumber>3.6.4.-</ecNumber>
    </recommendedName>
    <alternativeName>
        <fullName>ATP-dependent helicase VETFS</fullName>
    </alternativeName>
    <alternativeName>
        <fullName>ETF small subunit</fullName>
    </alternativeName>
    <alternativeName>
        <fullName>VETF D6 subunit</fullName>
    </alternativeName>
    <alternativeName>
        <fullName>Vaccinia virus early transcription factor small subunit</fullName>
        <shortName>VETF small subunit</shortName>
    </alternativeName>
</protein>
<feature type="chain" id="PRO_0000099069" description="Early transcription factor 70 kDa subunit">
    <location>
        <begin position="1"/>
        <end position="637"/>
    </location>
</feature>
<feature type="domain" description="Helicase ATP-binding" evidence="2">
    <location>
        <begin position="32"/>
        <end position="185"/>
    </location>
</feature>
<feature type="domain" description="Helicase C-terminal" evidence="3">
    <location>
        <begin position="327"/>
        <end position="507"/>
    </location>
</feature>
<feature type="short sequence motif" description="DEXH box">
    <location>
        <begin position="135"/>
        <end position="138"/>
    </location>
</feature>
<feature type="binding site" evidence="2">
    <location>
        <begin position="45"/>
        <end position="52"/>
    </location>
    <ligand>
        <name>ATP</name>
        <dbReference type="ChEBI" id="CHEBI:30616"/>
    </ligand>
</feature>
<keyword id="KW-0010">Activator</keyword>
<keyword id="KW-0067">ATP-binding</keyword>
<keyword id="KW-0238">DNA-binding</keyword>
<keyword id="KW-0347">Helicase</keyword>
<keyword id="KW-0378">Hydrolase</keyword>
<keyword id="KW-0426">Late protein</keyword>
<keyword id="KW-0547">Nucleotide-binding</keyword>
<keyword id="KW-1185">Reference proteome</keyword>
<keyword id="KW-0804">Transcription</keyword>
<keyword id="KW-0805">Transcription regulation</keyword>
<keyword id="KW-0946">Virion</keyword>
<proteinExistence type="inferred from homology"/>
<sequence>MNTGIIDLFDNHVDSIPTILPHQLATLDYLVRTIIDENRSVLLFHIMGSGKTIIALLFALVASRFKKVYILVPNINILKIFNYNMGVAMNLFNDEFIAENIFIHSTTSFYSLNYNDNVINYNGLSRYNNSIFIVDEAHNIFGNNTGELMTVIKNKNKIPFLLLSGSPITNTPNTLGHIIDLMSEETIDFGEIISRGKKVIQTLLNERGVNVLKDLLKGRISYYEMPDKDLPTIRYHGRKFLDTRVVYCHMSKLQERDYMITRRQLCYHEMFDKNMYNVSTAVLGQLNLMNNLDTLFQEQDKELYPNLKINNGVLYGEELVTLNISSKFKYFINRIQTLNGKHFIYFSNSTYGGLVIKYIMLSNGYSEYNGSQGTNPHMINGKPKTFAIVTSKMKSSLEDLLDVYNSPENDDGSQLMFLFSSNIMSESYTLKEVRHIWFMTIPDTFSQYNQILGRSIRKFSYADISEPVNVYLLAAVYSDFNDEVTSLNDYTQDELINVLPFDIKKLLYLKFKTKETNRIYSILQEMSETYSLPPHPSIVKVLLGELVRQFFYNNSRIKYNDSKLLKMVTSVIKNKEDARNYIDDIVNGHFFVSNKVFDKSLLYKYENDIITVPFRLSYEPFVWGVNFRKEYNVVSSP</sequence>
<name>ETF1_VACCC</name>
<dbReference type="EC" id="3.6.4.-"/>
<dbReference type="EMBL" id="M35027">
    <property type="protein sequence ID" value="AAA48105.1"/>
    <property type="molecule type" value="Genomic_DNA"/>
</dbReference>
<dbReference type="PIR" id="E42515">
    <property type="entry name" value="E42515"/>
</dbReference>
<dbReference type="SMR" id="P20634"/>
<dbReference type="Proteomes" id="UP000008269">
    <property type="component" value="Segment"/>
</dbReference>
<dbReference type="GO" id="GO:0044423">
    <property type="term" value="C:virion component"/>
    <property type="evidence" value="ECO:0007669"/>
    <property type="project" value="UniProtKB-KW"/>
</dbReference>
<dbReference type="GO" id="GO:0005524">
    <property type="term" value="F:ATP binding"/>
    <property type="evidence" value="ECO:0007669"/>
    <property type="project" value="UniProtKB-KW"/>
</dbReference>
<dbReference type="GO" id="GO:0003677">
    <property type="term" value="F:DNA binding"/>
    <property type="evidence" value="ECO:0000250"/>
    <property type="project" value="UniProtKB"/>
</dbReference>
<dbReference type="GO" id="GO:0004386">
    <property type="term" value="F:helicase activity"/>
    <property type="evidence" value="ECO:0007669"/>
    <property type="project" value="UniProtKB-KW"/>
</dbReference>
<dbReference type="GO" id="GO:0016787">
    <property type="term" value="F:hydrolase activity"/>
    <property type="evidence" value="ECO:0007669"/>
    <property type="project" value="UniProtKB-KW"/>
</dbReference>
<dbReference type="CDD" id="cd18785">
    <property type="entry name" value="SF2_C"/>
    <property type="match status" value="1"/>
</dbReference>
<dbReference type="FunFam" id="3.40.50.300:FF:001785">
    <property type="entry name" value="Early gene transcription factor VETF small subunit"/>
    <property type="match status" value="1"/>
</dbReference>
<dbReference type="Gene3D" id="3.40.50.300">
    <property type="entry name" value="P-loop containing nucleotide triphosphate hydrolases"/>
    <property type="match status" value="2"/>
</dbReference>
<dbReference type="InterPro" id="IPR002464">
    <property type="entry name" value="DNA/RNA_helicase_DEAH_CS"/>
</dbReference>
<dbReference type="InterPro" id="IPR006935">
    <property type="entry name" value="Helicase/UvrB_N"/>
</dbReference>
<dbReference type="InterPro" id="IPR014001">
    <property type="entry name" value="Helicase_ATP-bd"/>
</dbReference>
<dbReference type="InterPro" id="IPR001650">
    <property type="entry name" value="Helicase_C-like"/>
</dbReference>
<dbReference type="InterPro" id="IPR027417">
    <property type="entry name" value="P-loop_NTPase"/>
</dbReference>
<dbReference type="Pfam" id="PF00271">
    <property type="entry name" value="Helicase_C"/>
    <property type="match status" value="1"/>
</dbReference>
<dbReference type="Pfam" id="PF04851">
    <property type="entry name" value="ResIII"/>
    <property type="match status" value="1"/>
</dbReference>
<dbReference type="SMART" id="SM00487">
    <property type="entry name" value="DEXDc"/>
    <property type="match status" value="1"/>
</dbReference>
<dbReference type="SMART" id="SM00490">
    <property type="entry name" value="HELICc"/>
    <property type="match status" value="1"/>
</dbReference>
<dbReference type="SUPFAM" id="SSF52540">
    <property type="entry name" value="P-loop containing nucleoside triphosphate hydrolases"/>
    <property type="match status" value="1"/>
</dbReference>
<dbReference type="PROSITE" id="PS00690">
    <property type="entry name" value="DEAH_ATP_HELICASE"/>
    <property type="match status" value="1"/>
</dbReference>
<dbReference type="PROSITE" id="PS51192">
    <property type="entry name" value="HELICASE_ATP_BIND_1"/>
    <property type="match status" value="1"/>
</dbReference>
<dbReference type="PROSITE" id="PS51194">
    <property type="entry name" value="HELICASE_CTER"/>
    <property type="match status" value="1"/>
</dbReference>
<organismHost>
    <name type="scientific">Homo sapiens</name>
    <name type="common">Human</name>
    <dbReference type="NCBI Taxonomy" id="9606"/>
</organismHost>
<comment type="function">
    <text evidence="1">Acts with RNA polymerase to initiate transcription from early gene promoters. Is recruited by the RPO-associated protein of 94 kDa RAP94/OPG109 to form the early transcription complex, which also contains the core RNA polymerase. ETF heterodimer binds to early gene promoters.</text>
</comment>
<comment type="subunit">
    <text evidence="1">Heterodimer of a 70 kDa and a 82 kDa subunit. Part of the early transcription complex composed of ETF, RAP94/OPG109, and the DNA-directed RNA polymerase.</text>
</comment>
<comment type="subcellular location">
    <subcellularLocation>
        <location evidence="1">Virion</location>
    </subcellularLocation>
    <text evidence="1">All the enzymes and other proteins required to synthesize early mRNAs are packaged within the virion core along with the DNA genome. This is necessary because viral early mRNAs are synthesized within minutes after virus entry into the cell and are extruded through pores in the core particle.</text>
</comment>
<comment type="similarity">
    <text evidence="4">Belongs to the helicase family. VETF subfamily.</text>
</comment>
<reference key="1">
    <citation type="journal article" date="1990" name="Virology">
        <title>The complete DNA sequence of vaccinia virus.</title>
        <authorList>
            <person name="Goebel S.J."/>
            <person name="Johnson G.P."/>
            <person name="Perkus M.E."/>
            <person name="Davis S.W."/>
            <person name="Winslow J.P."/>
            <person name="Paoletti E."/>
        </authorList>
    </citation>
    <scope>NUCLEOTIDE SEQUENCE [LARGE SCALE GENOMIC DNA]</scope>
</reference>
<reference key="2">
    <citation type="journal article" date="1990" name="Virology">
        <title>Appendix to 'The complete DNA sequence of vaccinia virus'.</title>
        <authorList>
            <person name="Goebel S.J."/>
            <person name="Johnson G.P."/>
            <person name="Perkus M.E."/>
            <person name="Davis S.W."/>
            <person name="Winslow J.P."/>
            <person name="Paoletti E."/>
        </authorList>
    </citation>
    <scope>NUCLEOTIDE SEQUENCE [LARGE SCALE GENOMIC DNA]</scope>
</reference>
<organism>
    <name type="scientific">Vaccinia virus (strain Copenhagen)</name>
    <name type="common">VACV</name>
    <dbReference type="NCBI Taxonomy" id="10249"/>
    <lineage>
        <taxon>Viruses</taxon>
        <taxon>Varidnaviria</taxon>
        <taxon>Bamfordvirae</taxon>
        <taxon>Nucleocytoviricota</taxon>
        <taxon>Pokkesviricetes</taxon>
        <taxon>Chitovirales</taxon>
        <taxon>Poxviridae</taxon>
        <taxon>Chordopoxvirinae</taxon>
        <taxon>Orthopoxvirus</taxon>
        <taxon>Vaccinia virus</taxon>
    </lineage>
</organism>
<accession>P20634</accession>